<evidence type="ECO:0000255" key="1">
    <source>
        <dbReference type="HAMAP-Rule" id="MF_00295"/>
    </source>
</evidence>
<evidence type="ECO:0000269" key="2">
    <source>
    </source>
</evidence>
<evidence type="ECO:0000303" key="3">
    <source>
    </source>
</evidence>
<organism>
    <name type="scientific">Novosphingobium aromaticivorans (strain ATCC 700278 / DSM 12444 / CCUG 56034 / CIP 105152 / NBRC 16084 / F199)</name>
    <dbReference type="NCBI Taxonomy" id="279238"/>
    <lineage>
        <taxon>Bacteria</taxon>
        <taxon>Pseudomonadati</taxon>
        <taxon>Pseudomonadota</taxon>
        <taxon>Alphaproteobacteria</taxon>
        <taxon>Sphingomonadales</taxon>
        <taxon>Sphingomonadaceae</taxon>
        <taxon>Novosphingobium</taxon>
    </lineage>
</organism>
<keyword id="KW-0012">Acyltransferase</keyword>
<keyword id="KW-0028">Amino-acid biosynthesis</keyword>
<keyword id="KW-0963">Cytoplasm</keyword>
<keyword id="KW-0486">Methionine biosynthesis</keyword>
<keyword id="KW-1185">Reference proteome</keyword>
<keyword id="KW-0808">Transferase</keyword>
<sequence>MPIRIADNLPARRTLEAEGVIVMSETEAARQDIRPMRIALLNLMPDKITTETQIARLLGATPLQVDLELVRISDHVSKNTSAGHISAFYRPWDDVRAEKYDGLIVTGAPVETIPYEEVSYWDELRRIFDWSQSNVHRTLSVCWGAMAALYHFHGIEKHGLPTKASGVFRHVNHAPASPWMRGLPDVFDVPVSRWSEVRREDLPEGRGLSVLADSAETGLCLIDDPAMRTLHMFNHLEYDTLTLAGEYARDEGKYLPRNYFPGDDPQAMPANTWRGHGHLLYGNWINETYQTTPYDLADIGR</sequence>
<proteinExistence type="evidence at protein level"/>
<name>METAA_NOVAD</name>
<comment type="function">
    <text evidence="1 2">Transfers an acetyl group from acetyl-CoA to L-homoserine, forming acetyl-L-homoserine.</text>
</comment>
<comment type="catalytic activity">
    <reaction evidence="1 2">
        <text>L-homoserine + acetyl-CoA = O-acetyl-L-homoserine + CoA</text>
        <dbReference type="Rhea" id="RHEA:13701"/>
        <dbReference type="ChEBI" id="CHEBI:57287"/>
        <dbReference type="ChEBI" id="CHEBI:57288"/>
        <dbReference type="ChEBI" id="CHEBI:57476"/>
        <dbReference type="ChEBI" id="CHEBI:57716"/>
        <dbReference type="EC" id="2.3.1.31"/>
    </reaction>
</comment>
<comment type="pathway">
    <text evidence="1">Amino-acid biosynthesis; L-methionine biosynthesis via de novo pathway; O-acetyl-L-homoserine from L-homoserine: step 1/1.</text>
</comment>
<comment type="subcellular location">
    <subcellularLocation>
        <location evidence="1">Cytoplasm</location>
    </subcellularLocation>
</comment>
<comment type="similarity">
    <text evidence="1">Belongs to the MetA family.</text>
</comment>
<reference key="1">
    <citation type="submission" date="2006-01" db="EMBL/GenBank/DDBJ databases">
        <title>Complete sequence of Novosphingobium aromaticivorans DSM 12444.</title>
        <authorList>
            <consortium name="US DOE Joint Genome Institute"/>
            <person name="Copeland A."/>
            <person name="Lucas S."/>
            <person name="Lapidus A."/>
            <person name="Barry K."/>
            <person name="Detter J.C."/>
            <person name="Glavina T."/>
            <person name="Hammon N."/>
            <person name="Israni S."/>
            <person name="Pitluck S."/>
            <person name="Chain P."/>
            <person name="Malfatti S."/>
            <person name="Shin M."/>
            <person name="Vergez L."/>
            <person name="Schmutz J."/>
            <person name="Larimer F."/>
            <person name="Land M."/>
            <person name="Kyrpides N."/>
            <person name="Ivanova N."/>
            <person name="Fredrickson J."/>
            <person name="Balkwill D."/>
            <person name="Romine M.F."/>
            <person name="Richardson P."/>
        </authorList>
    </citation>
    <scope>NUCLEOTIDE SEQUENCE [LARGE SCALE GENOMIC DNA]</scope>
    <source>
        <strain>ATCC 700278 / DSM 12444 / CCUG 56034 / CIP 105152 / NBRC 16084 / F199</strain>
    </source>
</reference>
<reference key="2">
    <citation type="journal article" date="2017" name="Nat. Chem. Biol.">
        <title>Parallel evolution of non-homologous isofunctional enzymes in methionine biosynthesis.</title>
        <authorList>
            <person name="Bastard K."/>
            <person name="Perret A."/>
            <person name="Mariage A."/>
            <person name="Bessonnet T."/>
            <person name="Pinet-Turpault A."/>
            <person name="Petit J.L."/>
            <person name="Darii E."/>
            <person name="Bazire P."/>
            <person name="Vergne-Vaxelaire C."/>
            <person name="Brewee C."/>
            <person name="Debard A."/>
            <person name="Pellouin V."/>
            <person name="Besnard-Gonnet M."/>
            <person name="Artiguenave F."/>
            <person name="Medigue C."/>
            <person name="Vallenet D."/>
            <person name="Danchin A."/>
            <person name="Zaparucha A."/>
            <person name="Weissenbach J."/>
            <person name="Salanoubat M."/>
            <person name="de Berardinis V."/>
        </authorList>
    </citation>
    <scope>FUNCTION</scope>
    <scope>CATALYTIC ACTIVITY</scope>
</reference>
<accession>Q2GAJ2</accession>
<dbReference type="EC" id="2.3.1.31" evidence="1 2"/>
<dbReference type="EMBL" id="CP000248">
    <property type="protein sequence ID" value="ABD25131.1"/>
    <property type="molecule type" value="Genomic_DNA"/>
</dbReference>
<dbReference type="RefSeq" id="WP_011444345.1">
    <property type="nucleotide sequence ID" value="NC_007794.1"/>
</dbReference>
<dbReference type="SMR" id="Q2GAJ2"/>
<dbReference type="STRING" id="279238.Saro_0684"/>
<dbReference type="KEGG" id="nar:Saro_0684"/>
<dbReference type="eggNOG" id="COG1897">
    <property type="taxonomic scope" value="Bacteria"/>
</dbReference>
<dbReference type="HOGENOM" id="CLU_057851_0_1_5"/>
<dbReference type="UniPathway" id="UPA00051">
    <property type="reaction ID" value="UER00074"/>
</dbReference>
<dbReference type="Proteomes" id="UP000009134">
    <property type="component" value="Chromosome"/>
</dbReference>
<dbReference type="GO" id="GO:0005737">
    <property type="term" value="C:cytoplasm"/>
    <property type="evidence" value="ECO:0007669"/>
    <property type="project" value="UniProtKB-SubCell"/>
</dbReference>
<dbReference type="GO" id="GO:0004414">
    <property type="term" value="F:homoserine O-acetyltransferase activity"/>
    <property type="evidence" value="ECO:0007669"/>
    <property type="project" value="UniProtKB-EC"/>
</dbReference>
<dbReference type="GO" id="GO:0008899">
    <property type="term" value="F:homoserine O-succinyltransferase activity"/>
    <property type="evidence" value="ECO:0007669"/>
    <property type="project" value="UniProtKB-UniRule"/>
</dbReference>
<dbReference type="GO" id="GO:0019281">
    <property type="term" value="P:L-methionine biosynthetic process from homoserine via O-succinyl-L-homoserine and cystathionine"/>
    <property type="evidence" value="ECO:0007669"/>
    <property type="project" value="InterPro"/>
</dbReference>
<dbReference type="CDD" id="cd03131">
    <property type="entry name" value="GATase1_HTS"/>
    <property type="match status" value="1"/>
</dbReference>
<dbReference type="Gene3D" id="3.40.50.880">
    <property type="match status" value="1"/>
</dbReference>
<dbReference type="HAMAP" id="MF_00295">
    <property type="entry name" value="MetA_acyltransf"/>
    <property type="match status" value="1"/>
</dbReference>
<dbReference type="InterPro" id="IPR029062">
    <property type="entry name" value="Class_I_gatase-like"/>
</dbReference>
<dbReference type="InterPro" id="IPR005697">
    <property type="entry name" value="HST_MetA"/>
</dbReference>
<dbReference type="InterPro" id="IPR033752">
    <property type="entry name" value="MetA_family"/>
</dbReference>
<dbReference type="NCBIfam" id="TIGR01001">
    <property type="entry name" value="metA"/>
    <property type="match status" value="1"/>
</dbReference>
<dbReference type="PANTHER" id="PTHR20919">
    <property type="entry name" value="HOMOSERINE O-SUCCINYLTRANSFERASE"/>
    <property type="match status" value="1"/>
</dbReference>
<dbReference type="PANTHER" id="PTHR20919:SF0">
    <property type="entry name" value="HOMOSERINE O-SUCCINYLTRANSFERASE"/>
    <property type="match status" value="1"/>
</dbReference>
<dbReference type="Pfam" id="PF04204">
    <property type="entry name" value="HTS"/>
    <property type="match status" value="1"/>
</dbReference>
<dbReference type="PIRSF" id="PIRSF000450">
    <property type="entry name" value="H_ser_succinyltr"/>
    <property type="match status" value="1"/>
</dbReference>
<dbReference type="SUPFAM" id="SSF52317">
    <property type="entry name" value="Class I glutamine amidotransferase-like"/>
    <property type="match status" value="1"/>
</dbReference>
<feature type="chain" id="PRO_1000021821" description="Homoserine O-acetyltransferase">
    <location>
        <begin position="1"/>
        <end position="301"/>
    </location>
</feature>
<feature type="active site" description="Acyl-thioester intermediate" evidence="1">
    <location>
        <position position="142"/>
    </location>
</feature>
<feature type="active site" description="Proton acceptor" evidence="1">
    <location>
        <position position="235"/>
    </location>
</feature>
<feature type="active site" evidence="1">
    <location>
        <position position="237"/>
    </location>
</feature>
<feature type="binding site" evidence="1">
    <location>
        <position position="163"/>
    </location>
    <ligand>
        <name>substrate</name>
    </ligand>
</feature>
<feature type="binding site" evidence="1">
    <location>
        <position position="192"/>
    </location>
    <ligand>
        <name>substrate</name>
    </ligand>
</feature>
<feature type="binding site" evidence="1">
    <location>
        <position position="249"/>
    </location>
    <ligand>
        <name>substrate</name>
    </ligand>
</feature>
<feature type="site" description="Important for acyl-CoA specificity" evidence="1">
    <location>
        <position position="111"/>
    </location>
</feature>
<feature type="site" description="Important for substrate specificity" evidence="1">
    <location>
        <position position="192"/>
    </location>
</feature>
<gene>
    <name evidence="1 3" type="primary">metAA</name>
    <name type="ordered locus">Saro_0684</name>
</gene>
<protein>
    <recommendedName>
        <fullName evidence="1">Homoserine O-acetyltransferase</fullName>
        <shortName evidence="1 3">HAT</shortName>
        <ecNumber evidence="1 2">2.3.1.31</ecNumber>
    </recommendedName>
    <alternativeName>
        <fullName evidence="1">Homoserine transacetylase</fullName>
        <shortName evidence="1">HTA</shortName>
    </alternativeName>
</protein>